<reference key="1">
    <citation type="journal article" date="2004" name="Nat. Genet.">
        <title>Evidence in the Legionella pneumophila genome for exploitation of host cell functions and high genome plasticity.</title>
        <authorList>
            <person name="Cazalet C."/>
            <person name="Rusniok C."/>
            <person name="Brueggemann H."/>
            <person name="Zidane N."/>
            <person name="Magnier A."/>
            <person name="Ma L."/>
            <person name="Tichit M."/>
            <person name="Jarraud S."/>
            <person name="Bouchier C."/>
            <person name="Vandenesch F."/>
            <person name="Kunst F."/>
            <person name="Etienne J."/>
            <person name="Glaser P."/>
            <person name="Buchrieser C."/>
        </authorList>
    </citation>
    <scope>NUCLEOTIDE SEQUENCE [LARGE SCALE GENOMIC DNA]</scope>
    <source>
        <strain>Lens</strain>
    </source>
</reference>
<accession>Q5WSU1</accession>
<dbReference type="EC" id="3.6.1.-" evidence="1"/>
<dbReference type="EMBL" id="CR628337">
    <property type="protein sequence ID" value="CAH17028.1"/>
    <property type="molecule type" value="Genomic_DNA"/>
</dbReference>
<dbReference type="RefSeq" id="WP_010948558.1">
    <property type="nucleotide sequence ID" value="NC_006369.1"/>
</dbReference>
<dbReference type="SMR" id="Q5WSU1"/>
<dbReference type="KEGG" id="lpf:lpl2785"/>
<dbReference type="LegioList" id="lpl2785"/>
<dbReference type="HOGENOM" id="CLU_087195_3_1_6"/>
<dbReference type="Proteomes" id="UP000002517">
    <property type="component" value="Chromosome"/>
</dbReference>
<dbReference type="GO" id="GO:0016462">
    <property type="term" value="F:pyrophosphatase activity"/>
    <property type="evidence" value="ECO:0007669"/>
    <property type="project" value="UniProtKB-ARBA"/>
</dbReference>
<dbReference type="CDD" id="cd03671">
    <property type="entry name" value="NUDIX_Ap4A_hydrolase_plant_like"/>
    <property type="match status" value="1"/>
</dbReference>
<dbReference type="Gene3D" id="3.90.79.10">
    <property type="entry name" value="Nucleoside Triphosphate Pyrophosphohydrolase"/>
    <property type="match status" value="1"/>
</dbReference>
<dbReference type="HAMAP" id="MF_00298">
    <property type="entry name" value="Nudix_RppH"/>
    <property type="match status" value="1"/>
</dbReference>
<dbReference type="InterPro" id="IPR020476">
    <property type="entry name" value="Nudix_hydrolase"/>
</dbReference>
<dbReference type="InterPro" id="IPR015797">
    <property type="entry name" value="NUDIX_hydrolase-like_dom_sf"/>
</dbReference>
<dbReference type="InterPro" id="IPR020084">
    <property type="entry name" value="NUDIX_hydrolase_CS"/>
</dbReference>
<dbReference type="InterPro" id="IPR000086">
    <property type="entry name" value="NUDIX_hydrolase_dom"/>
</dbReference>
<dbReference type="InterPro" id="IPR022927">
    <property type="entry name" value="RppH"/>
</dbReference>
<dbReference type="NCBIfam" id="NF001937">
    <property type="entry name" value="PRK00714.1-4"/>
    <property type="match status" value="1"/>
</dbReference>
<dbReference type="NCBIfam" id="NF001938">
    <property type="entry name" value="PRK00714.1-5"/>
    <property type="match status" value="1"/>
</dbReference>
<dbReference type="PANTHER" id="PTHR43046">
    <property type="entry name" value="GDP-MANNOSE MANNOSYL HYDROLASE"/>
    <property type="match status" value="1"/>
</dbReference>
<dbReference type="PANTHER" id="PTHR43046:SF14">
    <property type="entry name" value="MUTT_NUDIX FAMILY PROTEIN"/>
    <property type="match status" value="1"/>
</dbReference>
<dbReference type="Pfam" id="PF00293">
    <property type="entry name" value="NUDIX"/>
    <property type="match status" value="1"/>
</dbReference>
<dbReference type="PRINTS" id="PR00502">
    <property type="entry name" value="NUDIXFAMILY"/>
</dbReference>
<dbReference type="SUPFAM" id="SSF55811">
    <property type="entry name" value="Nudix"/>
    <property type="match status" value="1"/>
</dbReference>
<dbReference type="PROSITE" id="PS51462">
    <property type="entry name" value="NUDIX"/>
    <property type="match status" value="1"/>
</dbReference>
<dbReference type="PROSITE" id="PS00893">
    <property type="entry name" value="NUDIX_BOX"/>
    <property type="match status" value="1"/>
</dbReference>
<protein>
    <recommendedName>
        <fullName evidence="1">RNA pyrophosphohydrolase</fullName>
        <ecNumber evidence="1">3.6.1.-</ecNumber>
    </recommendedName>
    <alternativeName>
        <fullName evidence="1">(Di)nucleoside polyphosphate hydrolase</fullName>
    </alternativeName>
</protein>
<feature type="chain" id="PRO_0000231912" description="RNA pyrophosphohydrolase">
    <location>
        <begin position="1"/>
        <end position="175"/>
    </location>
</feature>
<feature type="domain" description="Nudix hydrolase" evidence="1">
    <location>
        <begin position="7"/>
        <end position="150"/>
    </location>
</feature>
<feature type="short sequence motif" description="Nudix box">
    <location>
        <begin position="39"/>
        <end position="60"/>
    </location>
</feature>
<evidence type="ECO:0000255" key="1">
    <source>
        <dbReference type="HAMAP-Rule" id="MF_00298"/>
    </source>
</evidence>
<keyword id="KW-0378">Hydrolase</keyword>
<sequence length="175" mass="20709">MVIDRAGYRLNVGIILVNDSDRVFWGRRSGHDAWQFPQGGLAPGETAMQAMYRELHEEVGLDKGDVEILGSTRRWLKYRLPKQYLRHGSEPLVIGQKQKWYLLKLVTSEQKVRLDLSDSPEFDSWRWVDFHEPEQQVIFFKRQVYIQALKELEPLLKKERRTPYGLKRKRGNQRA</sequence>
<name>RPPH_LEGPL</name>
<proteinExistence type="inferred from homology"/>
<organism>
    <name type="scientific">Legionella pneumophila (strain Lens)</name>
    <dbReference type="NCBI Taxonomy" id="297245"/>
    <lineage>
        <taxon>Bacteria</taxon>
        <taxon>Pseudomonadati</taxon>
        <taxon>Pseudomonadota</taxon>
        <taxon>Gammaproteobacteria</taxon>
        <taxon>Legionellales</taxon>
        <taxon>Legionellaceae</taxon>
        <taxon>Legionella</taxon>
    </lineage>
</organism>
<comment type="function">
    <text evidence="1">Accelerates the degradation of transcripts by removing pyrophosphate from the 5'-end of triphosphorylated RNA, leading to a more labile monophosphorylated state that can stimulate subsequent ribonuclease cleavage.</text>
</comment>
<comment type="cofactor">
    <cofactor evidence="1">
        <name>a divalent metal cation</name>
        <dbReference type="ChEBI" id="CHEBI:60240"/>
    </cofactor>
</comment>
<comment type="similarity">
    <text evidence="1">Belongs to the Nudix hydrolase family. RppH subfamily.</text>
</comment>
<gene>
    <name evidence="1" type="primary">rppH</name>
    <name evidence="1" type="synonym">nudH</name>
    <name type="ordered locus">lpl2785</name>
</gene>